<name>ZFPP_MYCS2</name>
<gene>
    <name type="primary">uppS</name>
    <name type="ordered locus">MSMEG_5256</name>
    <name type="ordered locus">MSMEI_5118</name>
</gene>
<proteinExistence type="evidence at protein level"/>
<evidence type="ECO:0000250" key="1"/>
<evidence type="ECO:0000250" key="2">
    <source>
        <dbReference type="UniProtKB" id="P9WFF5"/>
    </source>
</evidence>
<evidence type="ECO:0000269" key="3">
    <source>
    </source>
</evidence>
<evidence type="ECO:0000269" key="4">
    <source>
    </source>
</evidence>
<evidence type="ECO:0000305" key="5"/>
<comment type="function">
    <text evidence="3">Catalyzes the condensation of only one isopentenyl pyrophosphate (IPP) unit in the cis configuration to E-geranyl diphosphate (E-GPP) generating the 15 carbon product (2Z,6E)-farnesyl diphosphate (Z-FPP or EZ-FPP). Z-FPP is the precursor of decaprenyl diphosphate, which has a central role in the biosynthesis of the mycobacterial cell wall.</text>
</comment>
<comment type="catalytic activity">
    <reaction evidence="3">
        <text>isopentenyl diphosphate + (2E)-geranyl diphosphate = (2Z,6E)-farnesyl diphosphate + diphosphate</text>
        <dbReference type="Rhea" id="RHEA:23300"/>
        <dbReference type="ChEBI" id="CHEBI:33019"/>
        <dbReference type="ChEBI" id="CHEBI:58057"/>
        <dbReference type="ChEBI" id="CHEBI:128769"/>
        <dbReference type="ChEBI" id="CHEBI:162247"/>
        <dbReference type="EC" id="2.5.1.68"/>
    </reaction>
</comment>
<comment type="cofactor">
    <cofactor evidence="2">
        <name>Mg(2+)</name>
        <dbReference type="ChEBI" id="CHEBI:18420"/>
    </cofactor>
    <text evidence="2">Binds 2 magnesium ions per subunit.</text>
</comment>
<comment type="subunit">
    <text evidence="2">Homodimer.</text>
</comment>
<comment type="subcellular location">
    <subcellularLocation>
        <location evidence="3 4">Cell membrane</location>
    </subcellularLocation>
</comment>
<comment type="similarity">
    <text evidence="5">Belongs to the UPP synthase family. Z-FPP synthase subfamily.</text>
</comment>
<protein>
    <recommendedName>
        <fullName>(2Z,6E)-farnesyl diphosphate synthase</fullName>
        <ecNumber evidence="3">2.5.1.68</ecNumber>
    </recommendedName>
    <alternativeName>
        <fullName>Short-chain Z-isoprenyl diphosphate synthase</fullName>
    </alternativeName>
    <alternativeName>
        <fullName>Z-FPP synthase</fullName>
        <shortName>Z-FPPS</shortName>
    </alternativeName>
    <alternativeName>
        <fullName>Z-Polyprenyl diphosphate synthase</fullName>
    </alternativeName>
    <alternativeName>
        <fullName>Z-isoprenyl diphosphate synthase</fullName>
    </alternativeName>
</protein>
<reference key="1">
    <citation type="submission" date="2006-10" db="EMBL/GenBank/DDBJ databases">
        <authorList>
            <person name="Fleischmann R.D."/>
            <person name="Dodson R.J."/>
            <person name="Haft D.H."/>
            <person name="Merkel J.S."/>
            <person name="Nelson W.C."/>
            <person name="Fraser C.M."/>
        </authorList>
    </citation>
    <scope>NUCLEOTIDE SEQUENCE [LARGE SCALE GENOMIC DNA]</scope>
    <source>
        <strain>ATCC 700084 / mc(2)155</strain>
    </source>
</reference>
<reference key="2">
    <citation type="journal article" date="2007" name="Genome Biol.">
        <title>Interrupted coding sequences in Mycobacterium smegmatis: authentic mutations or sequencing errors?</title>
        <authorList>
            <person name="Deshayes C."/>
            <person name="Perrodou E."/>
            <person name="Gallien S."/>
            <person name="Euphrasie D."/>
            <person name="Schaeffer C."/>
            <person name="Van-Dorsselaer A."/>
            <person name="Poch O."/>
            <person name="Lecompte O."/>
            <person name="Reyrat J.-M."/>
        </authorList>
    </citation>
    <scope>NUCLEOTIDE SEQUENCE [LARGE SCALE GENOMIC DNA]</scope>
    <source>
        <strain>ATCC 700084 / mc(2)155</strain>
    </source>
</reference>
<reference key="3">
    <citation type="journal article" date="2009" name="Genome Res.">
        <title>Ortho-proteogenomics: multiple proteomes investigation through orthology and a new MS-based protocol.</title>
        <authorList>
            <person name="Gallien S."/>
            <person name="Perrodou E."/>
            <person name="Carapito C."/>
            <person name="Deshayes C."/>
            <person name="Reyrat J.-M."/>
            <person name="Van Dorsselaer A."/>
            <person name="Poch O."/>
            <person name="Schaeffer C."/>
            <person name="Lecompte O."/>
        </authorList>
    </citation>
    <scope>NUCLEOTIDE SEQUENCE [LARGE SCALE GENOMIC DNA]</scope>
    <source>
        <strain>ATCC 700084 / mc(2)155</strain>
    </source>
</reference>
<reference key="4">
    <citation type="journal article" date="1973" name="Biochim. Biophys. Acta">
        <title>Characterization of the alkali-stable mannophospholipids of Mycobacterium smegmatis.</title>
        <authorList>
            <person name="Takayama K."/>
            <person name="Schnoes H.K."/>
            <person name="Semmler E.J."/>
        </authorList>
    </citation>
    <scope>SUBCELLULAR LOCATION</scope>
</reference>
<reference key="5">
    <citation type="journal article" date="2000" name="J. Bacteriol.">
        <title>Polyprenyl phosphate biosynthesis in Mycobacterium tuberculosis and Mycobacterium smegmatis.</title>
        <authorList>
            <person name="Crick D.C."/>
            <person name="Schulbach M.C."/>
            <person name="Zink E.E."/>
            <person name="Macchia M."/>
            <person name="Barontini S."/>
            <person name="Besra G.S."/>
            <person name="Brennan P.J."/>
        </authorList>
    </citation>
    <scope>FUNCTION AS A FARNESYL DIPHOSPHATE SYNTHASE</scope>
    <scope>CATALYTIC ACTIVITY</scope>
    <scope>SUBCELLULAR LOCATION</scope>
</reference>
<organism>
    <name type="scientific">Mycolicibacterium smegmatis (strain ATCC 700084 / mc(2)155)</name>
    <name type="common">Mycobacterium smegmatis</name>
    <dbReference type="NCBI Taxonomy" id="246196"/>
    <lineage>
        <taxon>Bacteria</taxon>
        <taxon>Bacillati</taxon>
        <taxon>Actinomycetota</taxon>
        <taxon>Actinomycetes</taxon>
        <taxon>Mycobacteriales</taxon>
        <taxon>Mycobacteriaceae</taxon>
        <taxon>Mycolicibacterium</taxon>
    </lineage>
</organism>
<keyword id="KW-1003">Cell membrane</keyword>
<keyword id="KW-0460">Magnesium</keyword>
<keyword id="KW-0472">Membrane</keyword>
<keyword id="KW-0479">Metal-binding</keyword>
<keyword id="KW-1185">Reference proteome</keyword>
<keyword id="KW-0808">Transferase</keyword>
<sequence>MDIIPPRLKEPAYRIYEMRLRHELVRSKAQLPRHIAVLCDGNRRWARDAGYDDVSIGYRKGAAKIAEMLRWCQAAGIEMATIYLLSTENLQRDPDELTALIEIITDVVEEICAPYNKWSVRTVGDLELLGDEPARRLREAVESTTTKGANFHVNVAVAYGGRQEIVDAVRSLLSKELANGATAEQLIEAVTVDGISENLYTSGQPDPDLVIRTSGEQRLSGFLLWQSAYSEMWFTEAYWPAFRRVDFLRALRDYTARHRRFGK</sequence>
<accession>A0R2W4</accession>
<accession>I7G761</accession>
<dbReference type="EC" id="2.5.1.68" evidence="3"/>
<dbReference type="EMBL" id="CP000480">
    <property type="protein sequence ID" value="ABK70340.1"/>
    <property type="molecule type" value="Genomic_DNA"/>
</dbReference>
<dbReference type="EMBL" id="CP001663">
    <property type="protein sequence ID" value="AFP41562.1"/>
    <property type="molecule type" value="Genomic_DNA"/>
</dbReference>
<dbReference type="RefSeq" id="WP_003896657.1">
    <property type="nucleotide sequence ID" value="NZ_SIJM01000014.1"/>
</dbReference>
<dbReference type="RefSeq" id="YP_889502.1">
    <property type="nucleotide sequence ID" value="NC_008596.1"/>
</dbReference>
<dbReference type="SMR" id="A0R2W4"/>
<dbReference type="STRING" id="246196.MSMEG_5256"/>
<dbReference type="PaxDb" id="246196-MSMEI_5118"/>
<dbReference type="KEGG" id="msb:LJ00_25995"/>
<dbReference type="KEGG" id="msg:MSMEI_5118"/>
<dbReference type="KEGG" id="msm:MSMEG_5256"/>
<dbReference type="PATRIC" id="fig|246196.19.peg.5127"/>
<dbReference type="eggNOG" id="COG0020">
    <property type="taxonomic scope" value="Bacteria"/>
</dbReference>
<dbReference type="OrthoDB" id="4191603at2"/>
<dbReference type="Proteomes" id="UP000000757">
    <property type="component" value="Chromosome"/>
</dbReference>
<dbReference type="Proteomes" id="UP000006158">
    <property type="component" value="Chromosome"/>
</dbReference>
<dbReference type="GO" id="GO:0005886">
    <property type="term" value="C:plasma membrane"/>
    <property type="evidence" value="ECO:0007669"/>
    <property type="project" value="UniProtKB-SubCell"/>
</dbReference>
<dbReference type="GO" id="GO:0045547">
    <property type="term" value="F:ditrans,polycis-polyprenyl diphosphate synthase [(2E,6E)-farnesyl diphosphate specific] activity"/>
    <property type="evidence" value="ECO:0007669"/>
    <property type="project" value="TreeGrafter"/>
</dbReference>
<dbReference type="GO" id="GO:0000287">
    <property type="term" value="F:magnesium ion binding"/>
    <property type="evidence" value="ECO:0000250"/>
    <property type="project" value="UniProtKB"/>
</dbReference>
<dbReference type="GO" id="GO:0033850">
    <property type="term" value="F:Z-farnesyl diphosphate synthase activity"/>
    <property type="evidence" value="ECO:0000314"/>
    <property type="project" value="UniProtKB"/>
</dbReference>
<dbReference type="GO" id="GO:0016094">
    <property type="term" value="P:polyprenol biosynthetic process"/>
    <property type="evidence" value="ECO:0000250"/>
    <property type="project" value="UniProtKB"/>
</dbReference>
<dbReference type="CDD" id="cd00475">
    <property type="entry name" value="Cis_IPPS"/>
    <property type="match status" value="1"/>
</dbReference>
<dbReference type="FunFam" id="3.40.1180.10:FF:000003">
    <property type="entry name" value="Isoprenyl transferase 2"/>
    <property type="match status" value="1"/>
</dbReference>
<dbReference type="Gene3D" id="3.40.1180.10">
    <property type="entry name" value="Decaprenyl diphosphate synthase-like"/>
    <property type="match status" value="1"/>
</dbReference>
<dbReference type="HAMAP" id="MF_01139">
    <property type="entry name" value="ISPT"/>
    <property type="match status" value="1"/>
</dbReference>
<dbReference type="InterPro" id="IPR001441">
    <property type="entry name" value="UPP_synth-like"/>
</dbReference>
<dbReference type="InterPro" id="IPR018520">
    <property type="entry name" value="UPP_synth-like_CS"/>
</dbReference>
<dbReference type="InterPro" id="IPR036424">
    <property type="entry name" value="UPP_synth-like_sf"/>
</dbReference>
<dbReference type="NCBIfam" id="NF011403">
    <property type="entry name" value="PRK14828.1"/>
    <property type="match status" value="1"/>
</dbReference>
<dbReference type="NCBIfam" id="TIGR00055">
    <property type="entry name" value="uppS"/>
    <property type="match status" value="1"/>
</dbReference>
<dbReference type="PANTHER" id="PTHR10291:SF43">
    <property type="entry name" value="DEHYDRODOLICHYL DIPHOSPHATE SYNTHASE COMPLEX SUBUNIT DHDDS"/>
    <property type="match status" value="1"/>
</dbReference>
<dbReference type="PANTHER" id="PTHR10291">
    <property type="entry name" value="DEHYDRODOLICHYL DIPHOSPHATE SYNTHASE FAMILY MEMBER"/>
    <property type="match status" value="1"/>
</dbReference>
<dbReference type="Pfam" id="PF01255">
    <property type="entry name" value="Prenyltransf"/>
    <property type="match status" value="1"/>
</dbReference>
<dbReference type="SUPFAM" id="SSF64005">
    <property type="entry name" value="Undecaprenyl diphosphate synthase"/>
    <property type="match status" value="1"/>
</dbReference>
<dbReference type="PROSITE" id="PS01066">
    <property type="entry name" value="UPP_SYNTHASE"/>
    <property type="match status" value="1"/>
</dbReference>
<feature type="chain" id="PRO_0000417571" description="(2Z,6E)-farnesyl diphosphate synthase">
    <location>
        <begin position="1"/>
        <end position="263"/>
    </location>
</feature>
<feature type="active site" evidence="1">
    <location>
        <position position="40"/>
    </location>
</feature>
<feature type="active site" description="Proton acceptor" evidence="1">
    <location>
        <position position="89"/>
    </location>
</feature>
<feature type="binding site" evidence="1">
    <location>
        <position position="40"/>
    </location>
    <ligand>
        <name>Mg(2+)</name>
        <dbReference type="ChEBI" id="CHEBI:18420"/>
    </ligand>
</feature>
<feature type="binding site" evidence="1">
    <location>
        <begin position="41"/>
        <end position="44"/>
    </location>
    <ligand>
        <name>substrate</name>
    </ligand>
</feature>
<feature type="binding site" evidence="1">
    <location>
        <position position="45"/>
    </location>
    <ligand>
        <name>substrate</name>
    </ligand>
</feature>
<feature type="binding site" evidence="1">
    <location>
        <begin position="86"/>
        <end position="88"/>
    </location>
    <ligand>
        <name>substrate</name>
    </ligand>
</feature>
<feature type="binding site" evidence="1">
    <location>
        <position position="92"/>
    </location>
    <ligand>
        <name>substrate</name>
    </ligand>
</feature>
<feature type="binding site" evidence="1">
    <location>
        <position position="212"/>
    </location>
    <ligand>
        <name>substrate</name>
    </ligand>
</feature>
<feature type="binding site" evidence="1">
    <location>
        <begin position="218"/>
        <end position="220"/>
    </location>
    <ligand>
        <name>substrate</name>
    </ligand>
</feature>
<feature type="binding site" evidence="1">
    <location>
        <position position="231"/>
    </location>
    <ligand>
        <name>Mg(2+)</name>
        <dbReference type="ChEBI" id="CHEBI:18420"/>
    </ligand>
</feature>
<feature type="site" description="Important for determining product length" evidence="1">
    <location>
        <position position="84"/>
    </location>
</feature>